<sequence>MKKRIKELTDLLNRYRYDYYTKDAPSVSDSDYDKLYRELVTLEQSYPEYVLQDSPTQQVGGTILKGFEKYRHQYPLFSLQDAFSREELDAFDKRVKAEFPNATYLAELKIDGLSISLSYENGFLQVGATRGDGNIGENITENIKKIKDIPYQLSEPLTITVRGEAYMSRQSFKAINEARQENGETEFANPRNAAAGTLRQLDTSVVAKRQLATFLYQEASPTARNQQNEVLAELADLGFSVNPYYQLTSSMDEIWDFIKTIEAKRDQLAYDIDGVVIKVNSLAMQEELGFTVKAPRWAIAYKFPAEEKEAEILSVDWTVGRTGVVTPTANLTPVQLAGTTVSRATLHNVDYIAEKDIRIGDTVIVYKAGDIIPAVLNVVMSKRNQQEVMLIPKLCPSCGSELVHFEDEVALRCINPLCPSLIQRSLEHFASRDAMNITGLGPAIVEKLFLAGFVHDVADIYQLTKEDFMQLDGIKEKSADKLLAAIEASKSNSAEKLLFGLGIRHIGSKVSRLILEVYGDISALLTAKEEEIARIDGLGSTIAQSLTQYFEQKTAAILVDELKTAGVNMHYSGQKVNSDAALFGLTVVLTGKLNQLNRNEAKDKLEALGAKVTGSVSKKTDLVIAGSDAGSKLEKAKSLGIRIEDEDWLRQL</sequence>
<accession>Q9A0J5</accession>
<accession>Q48ZM7</accession>
<reference key="1">
    <citation type="journal article" date="2001" name="Proc. Natl. Acad. Sci. U.S.A.">
        <title>Complete genome sequence of an M1 strain of Streptococcus pyogenes.</title>
        <authorList>
            <person name="Ferretti J.J."/>
            <person name="McShan W.M."/>
            <person name="Ajdic D.J."/>
            <person name="Savic D.J."/>
            <person name="Savic G."/>
            <person name="Lyon K."/>
            <person name="Primeaux C."/>
            <person name="Sezate S."/>
            <person name="Suvorov A.N."/>
            <person name="Kenton S."/>
            <person name="Lai H.S."/>
            <person name="Lin S.P."/>
            <person name="Qian Y."/>
            <person name="Jia H.G."/>
            <person name="Najar F.Z."/>
            <person name="Ren Q."/>
            <person name="Zhu H."/>
            <person name="Song L."/>
            <person name="White J."/>
            <person name="Yuan X."/>
            <person name="Clifton S.W."/>
            <person name="Roe B.A."/>
            <person name="McLaughlin R.E."/>
        </authorList>
    </citation>
    <scope>NUCLEOTIDE SEQUENCE [LARGE SCALE GENOMIC DNA]</scope>
    <source>
        <strain>ATCC 700294 / SF370 / Serotype M1</strain>
    </source>
</reference>
<reference key="2">
    <citation type="journal article" date="2005" name="J. Infect. Dis.">
        <title>Evolutionary origin and emergence of a highly successful clone of serotype M1 group A Streptococcus involved multiple horizontal gene transfer events.</title>
        <authorList>
            <person name="Sumby P."/>
            <person name="Porcella S.F."/>
            <person name="Madrigal A.G."/>
            <person name="Barbian K.D."/>
            <person name="Virtaneva K."/>
            <person name="Ricklefs S.M."/>
            <person name="Sturdevant D.E."/>
            <person name="Graham M.R."/>
            <person name="Vuopio-Varkila J."/>
            <person name="Hoe N.P."/>
            <person name="Musser J.M."/>
        </authorList>
    </citation>
    <scope>NUCLEOTIDE SEQUENCE [LARGE SCALE GENOMIC DNA]</scope>
    <source>
        <strain>ATCC BAA-947 / MGAS5005 / Serotype M1</strain>
    </source>
</reference>
<protein>
    <recommendedName>
        <fullName evidence="1">DNA ligase</fullName>
        <ecNumber evidence="1">6.5.1.2</ecNumber>
    </recommendedName>
    <alternativeName>
        <fullName evidence="1">Polydeoxyribonucleotide synthase [NAD(+)]</fullName>
    </alternativeName>
</protein>
<feature type="chain" id="PRO_0000313457" description="DNA ligase">
    <location>
        <begin position="1"/>
        <end position="652"/>
    </location>
</feature>
<feature type="domain" description="BRCT" evidence="1">
    <location>
        <begin position="577"/>
        <end position="652"/>
    </location>
</feature>
<feature type="active site" description="N6-AMP-lysine intermediate" evidence="1">
    <location>
        <position position="109"/>
    </location>
</feature>
<feature type="binding site" evidence="1">
    <location>
        <begin position="29"/>
        <end position="33"/>
    </location>
    <ligand>
        <name>NAD(+)</name>
        <dbReference type="ChEBI" id="CHEBI:57540"/>
    </ligand>
</feature>
<feature type="binding site" evidence="1">
    <location>
        <begin position="78"/>
        <end position="79"/>
    </location>
    <ligand>
        <name>NAD(+)</name>
        <dbReference type="ChEBI" id="CHEBI:57540"/>
    </ligand>
</feature>
<feature type="binding site" evidence="1">
    <location>
        <position position="107"/>
    </location>
    <ligand>
        <name>NAD(+)</name>
        <dbReference type="ChEBI" id="CHEBI:57540"/>
    </ligand>
</feature>
<feature type="binding site" evidence="1">
    <location>
        <position position="130"/>
    </location>
    <ligand>
        <name>NAD(+)</name>
        <dbReference type="ChEBI" id="CHEBI:57540"/>
    </ligand>
</feature>
<feature type="binding site" evidence="1">
    <location>
        <position position="164"/>
    </location>
    <ligand>
        <name>NAD(+)</name>
        <dbReference type="ChEBI" id="CHEBI:57540"/>
    </ligand>
</feature>
<feature type="binding site" evidence="1">
    <location>
        <position position="278"/>
    </location>
    <ligand>
        <name>NAD(+)</name>
        <dbReference type="ChEBI" id="CHEBI:57540"/>
    </ligand>
</feature>
<feature type="binding site" evidence="1">
    <location>
        <position position="302"/>
    </location>
    <ligand>
        <name>NAD(+)</name>
        <dbReference type="ChEBI" id="CHEBI:57540"/>
    </ligand>
</feature>
<feature type="binding site" evidence="1">
    <location>
        <position position="395"/>
    </location>
    <ligand>
        <name>Zn(2+)</name>
        <dbReference type="ChEBI" id="CHEBI:29105"/>
    </ligand>
</feature>
<feature type="binding site" evidence="1">
    <location>
        <position position="398"/>
    </location>
    <ligand>
        <name>Zn(2+)</name>
        <dbReference type="ChEBI" id="CHEBI:29105"/>
    </ligand>
</feature>
<feature type="binding site" evidence="1">
    <location>
        <position position="413"/>
    </location>
    <ligand>
        <name>Zn(2+)</name>
        <dbReference type="ChEBI" id="CHEBI:29105"/>
    </ligand>
</feature>
<feature type="binding site" evidence="1">
    <location>
        <position position="418"/>
    </location>
    <ligand>
        <name>Zn(2+)</name>
        <dbReference type="ChEBI" id="CHEBI:29105"/>
    </ligand>
</feature>
<name>DNLJ_STRP1</name>
<proteinExistence type="inferred from homology"/>
<gene>
    <name evidence="1" type="primary">ligA</name>
    <name type="ordered locus">SPy_0751</name>
    <name type="ordered locus">M5005_Spy0573</name>
</gene>
<dbReference type="EC" id="6.5.1.2" evidence="1"/>
<dbReference type="EMBL" id="AE004092">
    <property type="protein sequence ID" value="AAK33695.1"/>
    <property type="molecule type" value="Genomic_DNA"/>
</dbReference>
<dbReference type="EMBL" id="CP000017">
    <property type="protein sequence ID" value="AAZ51191.1"/>
    <property type="molecule type" value="Genomic_DNA"/>
</dbReference>
<dbReference type="RefSeq" id="NP_268974.1">
    <property type="nucleotide sequence ID" value="NC_002737.2"/>
</dbReference>
<dbReference type="SMR" id="Q9A0J5"/>
<dbReference type="PaxDb" id="1314-HKU360_00583"/>
<dbReference type="KEGG" id="spy:SPy_0751"/>
<dbReference type="KEGG" id="spz:M5005_Spy0573"/>
<dbReference type="PATRIC" id="fig|160490.10.peg.640"/>
<dbReference type="HOGENOM" id="CLU_007764_2_1_9"/>
<dbReference type="OMA" id="HDVEHEI"/>
<dbReference type="Proteomes" id="UP000000750">
    <property type="component" value="Chromosome"/>
</dbReference>
<dbReference type="GO" id="GO:0005829">
    <property type="term" value="C:cytosol"/>
    <property type="evidence" value="ECO:0007669"/>
    <property type="project" value="TreeGrafter"/>
</dbReference>
<dbReference type="GO" id="GO:0003677">
    <property type="term" value="F:DNA binding"/>
    <property type="evidence" value="ECO:0007669"/>
    <property type="project" value="InterPro"/>
</dbReference>
<dbReference type="GO" id="GO:0003911">
    <property type="term" value="F:DNA ligase (NAD+) activity"/>
    <property type="evidence" value="ECO:0007669"/>
    <property type="project" value="UniProtKB-UniRule"/>
</dbReference>
<dbReference type="GO" id="GO:0046872">
    <property type="term" value="F:metal ion binding"/>
    <property type="evidence" value="ECO:0007669"/>
    <property type="project" value="UniProtKB-KW"/>
</dbReference>
<dbReference type="GO" id="GO:0006281">
    <property type="term" value="P:DNA repair"/>
    <property type="evidence" value="ECO:0007669"/>
    <property type="project" value="UniProtKB-KW"/>
</dbReference>
<dbReference type="GO" id="GO:0006260">
    <property type="term" value="P:DNA replication"/>
    <property type="evidence" value="ECO:0007669"/>
    <property type="project" value="UniProtKB-KW"/>
</dbReference>
<dbReference type="CDD" id="cd17748">
    <property type="entry name" value="BRCT_DNA_ligase_like"/>
    <property type="match status" value="1"/>
</dbReference>
<dbReference type="CDD" id="cd00114">
    <property type="entry name" value="LIGANc"/>
    <property type="match status" value="1"/>
</dbReference>
<dbReference type="FunFam" id="1.10.150.20:FF:000007">
    <property type="entry name" value="DNA ligase"/>
    <property type="match status" value="1"/>
</dbReference>
<dbReference type="FunFam" id="1.10.287.610:FF:000002">
    <property type="entry name" value="DNA ligase"/>
    <property type="match status" value="1"/>
</dbReference>
<dbReference type="FunFam" id="2.40.50.140:FF:000012">
    <property type="entry name" value="DNA ligase"/>
    <property type="match status" value="1"/>
</dbReference>
<dbReference type="FunFam" id="3.30.470.30:FF:000001">
    <property type="entry name" value="DNA ligase"/>
    <property type="match status" value="1"/>
</dbReference>
<dbReference type="Gene3D" id="6.20.10.30">
    <property type="match status" value="1"/>
</dbReference>
<dbReference type="Gene3D" id="1.10.150.20">
    <property type="entry name" value="5' to 3' exonuclease, C-terminal subdomain"/>
    <property type="match status" value="2"/>
</dbReference>
<dbReference type="Gene3D" id="3.40.50.10190">
    <property type="entry name" value="BRCT domain"/>
    <property type="match status" value="1"/>
</dbReference>
<dbReference type="Gene3D" id="3.30.470.30">
    <property type="entry name" value="DNA ligase/mRNA capping enzyme"/>
    <property type="match status" value="1"/>
</dbReference>
<dbReference type="Gene3D" id="1.10.287.610">
    <property type="entry name" value="Helix hairpin bin"/>
    <property type="match status" value="1"/>
</dbReference>
<dbReference type="Gene3D" id="2.40.50.140">
    <property type="entry name" value="Nucleic acid-binding proteins"/>
    <property type="match status" value="1"/>
</dbReference>
<dbReference type="HAMAP" id="MF_01588">
    <property type="entry name" value="DNA_ligase_A"/>
    <property type="match status" value="1"/>
</dbReference>
<dbReference type="InterPro" id="IPR001357">
    <property type="entry name" value="BRCT_dom"/>
</dbReference>
<dbReference type="InterPro" id="IPR036420">
    <property type="entry name" value="BRCT_dom_sf"/>
</dbReference>
<dbReference type="InterPro" id="IPR041663">
    <property type="entry name" value="DisA/LigA_HHH"/>
</dbReference>
<dbReference type="InterPro" id="IPR001679">
    <property type="entry name" value="DNA_ligase"/>
</dbReference>
<dbReference type="InterPro" id="IPR018239">
    <property type="entry name" value="DNA_ligase_AS"/>
</dbReference>
<dbReference type="InterPro" id="IPR033136">
    <property type="entry name" value="DNA_ligase_CS"/>
</dbReference>
<dbReference type="InterPro" id="IPR013839">
    <property type="entry name" value="DNAligase_adenylation"/>
</dbReference>
<dbReference type="InterPro" id="IPR013840">
    <property type="entry name" value="DNAligase_N"/>
</dbReference>
<dbReference type="InterPro" id="IPR003583">
    <property type="entry name" value="Hlx-hairpin-Hlx_DNA-bd_motif"/>
</dbReference>
<dbReference type="InterPro" id="IPR012340">
    <property type="entry name" value="NA-bd_OB-fold"/>
</dbReference>
<dbReference type="InterPro" id="IPR004150">
    <property type="entry name" value="NAD_DNA_ligase_OB"/>
</dbReference>
<dbReference type="InterPro" id="IPR010994">
    <property type="entry name" value="RuvA_2-like"/>
</dbReference>
<dbReference type="InterPro" id="IPR004149">
    <property type="entry name" value="Znf_DNAligase_C4"/>
</dbReference>
<dbReference type="NCBIfam" id="TIGR00575">
    <property type="entry name" value="dnlj"/>
    <property type="match status" value="1"/>
</dbReference>
<dbReference type="NCBIfam" id="NF005932">
    <property type="entry name" value="PRK07956.1"/>
    <property type="match status" value="1"/>
</dbReference>
<dbReference type="PANTHER" id="PTHR23389">
    <property type="entry name" value="CHROMOSOME TRANSMISSION FIDELITY FACTOR 18"/>
    <property type="match status" value="1"/>
</dbReference>
<dbReference type="PANTHER" id="PTHR23389:SF9">
    <property type="entry name" value="DNA LIGASE"/>
    <property type="match status" value="1"/>
</dbReference>
<dbReference type="Pfam" id="PF00533">
    <property type="entry name" value="BRCT"/>
    <property type="match status" value="1"/>
</dbReference>
<dbReference type="Pfam" id="PF01653">
    <property type="entry name" value="DNA_ligase_aden"/>
    <property type="match status" value="1"/>
</dbReference>
<dbReference type="Pfam" id="PF03120">
    <property type="entry name" value="DNA_ligase_OB"/>
    <property type="match status" value="1"/>
</dbReference>
<dbReference type="Pfam" id="PF03119">
    <property type="entry name" value="DNA_ligase_ZBD"/>
    <property type="match status" value="1"/>
</dbReference>
<dbReference type="Pfam" id="PF12826">
    <property type="entry name" value="HHH_2"/>
    <property type="match status" value="1"/>
</dbReference>
<dbReference type="Pfam" id="PF14520">
    <property type="entry name" value="HHH_5"/>
    <property type="match status" value="1"/>
</dbReference>
<dbReference type="PIRSF" id="PIRSF001604">
    <property type="entry name" value="LigA"/>
    <property type="match status" value="1"/>
</dbReference>
<dbReference type="SMART" id="SM00292">
    <property type="entry name" value="BRCT"/>
    <property type="match status" value="1"/>
</dbReference>
<dbReference type="SMART" id="SM00278">
    <property type="entry name" value="HhH1"/>
    <property type="match status" value="3"/>
</dbReference>
<dbReference type="SMART" id="SM00532">
    <property type="entry name" value="LIGANc"/>
    <property type="match status" value="1"/>
</dbReference>
<dbReference type="SUPFAM" id="SSF52113">
    <property type="entry name" value="BRCT domain"/>
    <property type="match status" value="1"/>
</dbReference>
<dbReference type="SUPFAM" id="SSF56091">
    <property type="entry name" value="DNA ligase/mRNA capping enzyme, catalytic domain"/>
    <property type="match status" value="1"/>
</dbReference>
<dbReference type="SUPFAM" id="SSF50249">
    <property type="entry name" value="Nucleic acid-binding proteins"/>
    <property type="match status" value="1"/>
</dbReference>
<dbReference type="SUPFAM" id="SSF47781">
    <property type="entry name" value="RuvA domain 2-like"/>
    <property type="match status" value="1"/>
</dbReference>
<dbReference type="PROSITE" id="PS50172">
    <property type="entry name" value="BRCT"/>
    <property type="match status" value="1"/>
</dbReference>
<dbReference type="PROSITE" id="PS01055">
    <property type="entry name" value="DNA_LIGASE_N1"/>
    <property type="match status" value="1"/>
</dbReference>
<dbReference type="PROSITE" id="PS01056">
    <property type="entry name" value="DNA_LIGASE_N2"/>
    <property type="match status" value="1"/>
</dbReference>
<evidence type="ECO:0000255" key="1">
    <source>
        <dbReference type="HAMAP-Rule" id="MF_01588"/>
    </source>
</evidence>
<comment type="function">
    <text evidence="1">DNA ligase that catalyzes the formation of phosphodiester linkages between 5'-phosphoryl and 3'-hydroxyl groups in double-stranded DNA using NAD as a coenzyme and as the energy source for the reaction. It is essential for DNA replication and repair of damaged DNA.</text>
</comment>
<comment type="catalytic activity">
    <reaction evidence="1">
        <text>NAD(+) + (deoxyribonucleotide)n-3'-hydroxyl + 5'-phospho-(deoxyribonucleotide)m = (deoxyribonucleotide)n+m + AMP + beta-nicotinamide D-nucleotide.</text>
        <dbReference type="EC" id="6.5.1.2"/>
    </reaction>
</comment>
<comment type="cofactor">
    <cofactor evidence="1">
        <name>Mg(2+)</name>
        <dbReference type="ChEBI" id="CHEBI:18420"/>
    </cofactor>
    <cofactor evidence="1">
        <name>Mn(2+)</name>
        <dbReference type="ChEBI" id="CHEBI:29035"/>
    </cofactor>
</comment>
<comment type="similarity">
    <text evidence="1">Belongs to the NAD-dependent DNA ligase family. LigA subfamily.</text>
</comment>
<keyword id="KW-0227">DNA damage</keyword>
<keyword id="KW-0234">DNA repair</keyword>
<keyword id="KW-0235">DNA replication</keyword>
<keyword id="KW-0436">Ligase</keyword>
<keyword id="KW-0460">Magnesium</keyword>
<keyword id="KW-0464">Manganese</keyword>
<keyword id="KW-0479">Metal-binding</keyword>
<keyword id="KW-0520">NAD</keyword>
<keyword id="KW-1185">Reference proteome</keyword>
<keyword id="KW-0862">Zinc</keyword>
<organism>
    <name type="scientific">Streptococcus pyogenes serotype M1</name>
    <dbReference type="NCBI Taxonomy" id="301447"/>
    <lineage>
        <taxon>Bacteria</taxon>
        <taxon>Bacillati</taxon>
        <taxon>Bacillota</taxon>
        <taxon>Bacilli</taxon>
        <taxon>Lactobacillales</taxon>
        <taxon>Streptococcaceae</taxon>
        <taxon>Streptococcus</taxon>
    </lineage>
</organism>